<sequence>MTKKYFGTDGIRGRVGEFPITPDFMLKLGWAAGMAFRSMGACRILVGKDTRISGYMFESALEAGLSAAGADVMLLGPMPTPAIAYLTRTFHAEAGIVISASHNPHDDNGIKFFSGQGTKLPDEIELMIEELLDAPMTVVESSKLGKVSRINDASGRYIEFCKSSVPSSTNFAGLKIVVDCAHGATYKVAPSVFKELGADVTVLSAQPNGLNINDNCGSTHMEQLQAAVLAEHADLGIAFDGDGDRVLMVDHTGAIVDGDDLLFIIARDLHERNKLQGGVVGTLMSNLGLELALADLGIPFVRANVGDRYVIAELLERNWQVGGENSGHVVCFQHTTTGDAIIAALQVLLSLRRREESLAQARQALRKCPQVLLNVRFAGGENPIEHPAVKEACERVTLAMAGRGRVLLRKSGTEPLVRVMVEGDDETQVRGHAEDLAKLVTEVCA</sequence>
<keyword id="KW-0413">Isomerase</keyword>
<keyword id="KW-0460">Magnesium</keyword>
<keyword id="KW-0479">Metal-binding</keyword>
<keyword id="KW-0597">Phosphoprotein</keyword>
<accession>C3K264</accession>
<feature type="chain" id="PRO_1000215495" description="Phosphoglucosamine mutase">
    <location>
        <begin position="1"/>
        <end position="445"/>
    </location>
</feature>
<feature type="active site" description="Phosphoserine intermediate" evidence="1">
    <location>
        <position position="101"/>
    </location>
</feature>
<feature type="binding site" description="via phosphate group" evidence="1">
    <location>
        <position position="101"/>
    </location>
    <ligand>
        <name>Mg(2+)</name>
        <dbReference type="ChEBI" id="CHEBI:18420"/>
    </ligand>
</feature>
<feature type="binding site" evidence="1">
    <location>
        <position position="240"/>
    </location>
    <ligand>
        <name>Mg(2+)</name>
        <dbReference type="ChEBI" id="CHEBI:18420"/>
    </ligand>
</feature>
<feature type="binding site" evidence="1">
    <location>
        <position position="242"/>
    </location>
    <ligand>
        <name>Mg(2+)</name>
        <dbReference type="ChEBI" id="CHEBI:18420"/>
    </ligand>
</feature>
<feature type="binding site" evidence="1">
    <location>
        <position position="244"/>
    </location>
    <ligand>
        <name>Mg(2+)</name>
        <dbReference type="ChEBI" id="CHEBI:18420"/>
    </ligand>
</feature>
<feature type="modified residue" description="Phosphoserine" evidence="1">
    <location>
        <position position="101"/>
    </location>
</feature>
<proteinExistence type="inferred from homology"/>
<gene>
    <name evidence="1" type="primary">glmM</name>
    <name type="ordered locus">PFLU_5258</name>
</gene>
<name>GLMM_PSEFS</name>
<evidence type="ECO:0000255" key="1">
    <source>
        <dbReference type="HAMAP-Rule" id="MF_01554"/>
    </source>
</evidence>
<reference key="1">
    <citation type="journal article" date="2009" name="Genome Biol.">
        <title>Genomic and genetic analyses of diversity and plant interactions of Pseudomonas fluorescens.</title>
        <authorList>
            <person name="Silby M.W."/>
            <person name="Cerdeno-Tarraga A.M."/>
            <person name="Vernikos G.S."/>
            <person name="Giddens S.R."/>
            <person name="Jackson R.W."/>
            <person name="Preston G.M."/>
            <person name="Zhang X.-X."/>
            <person name="Moon C.D."/>
            <person name="Gehrig S.M."/>
            <person name="Godfrey S.A.C."/>
            <person name="Knight C.G."/>
            <person name="Malone J.G."/>
            <person name="Robinson Z."/>
            <person name="Spiers A.J."/>
            <person name="Harris S."/>
            <person name="Challis G.L."/>
            <person name="Yaxley A.M."/>
            <person name="Harris D."/>
            <person name="Seeger K."/>
            <person name="Murphy L."/>
            <person name="Rutter S."/>
            <person name="Squares R."/>
            <person name="Quail M.A."/>
            <person name="Saunders E."/>
            <person name="Mavromatis K."/>
            <person name="Brettin T.S."/>
            <person name="Bentley S.D."/>
            <person name="Hothersall J."/>
            <person name="Stephens E."/>
            <person name="Thomas C.M."/>
            <person name="Parkhill J."/>
            <person name="Levy S.B."/>
            <person name="Rainey P.B."/>
            <person name="Thomson N.R."/>
        </authorList>
    </citation>
    <scope>NUCLEOTIDE SEQUENCE [LARGE SCALE GENOMIC DNA]</scope>
    <source>
        <strain>SBW25</strain>
    </source>
</reference>
<organism>
    <name type="scientific">Pseudomonas fluorescens (strain SBW25)</name>
    <dbReference type="NCBI Taxonomy" id="216595"/>
    <lineage>
        <taxon>Bacteria</taxon>
        <taxon>Pseudomonadati</taxon>
        <taxon>Pseudomonadota</taxon>
        <taxon>Gammaproteobacteria</taxon>
        <taxon>Pseudomonadales</taxon>
        <taxon>Pseudomonadaceae</taxon>
        <taxon>Pseudomonas</taxon>
    </lineage>
</organism>
<dbReference type="EC" id="5.4.2.10" evidence="1"/>
<dbReference type="EMBL" id="AM181176">
    <property type="protein sequence ID" value="CAY52358.1"/>
    <property type="molecule type" value="Genomic_DNA"/>
</dbReference>
<dbReference type="RefSeq" id="WP_015885921.1">
    <property type="nucleotide sequence ID" value="NC_012660.1"/>
</dbReference>
<dbReference type="SMR" id="C3K264"/>
<dbReference type="STRING" id="294.SRM1_00820"/>
<dbReference type="GeneID" id="93466889"/>
<dbReference type="eggNOG" id="COG1109">
    <property type="taxonomic scope" value="Bacteria"/>
</dbReference>
<dbReference type="HOGENOM" id="CLU_016950_7_0_6"/>
<dbReference type="OrthoDB" id="9803322at2"/>
<dbReference type="GO" id="GO:0005829">
    <property type="term" value="C:cytosol"/>
    <property type="evidence" value="ECO:0007669"/>
    <property type="project" value="TreeGrafter"/>
</dbReference>
<dbReference type="GO" id="GO:0000287">
    <property type="term" value="F:magnesium ion binding"/>
    <property type="evidence" value="ECO:0007669"/>
    <property type="project" value="UniProtKB-UniRule"/>
</dbReference>
<dbReference type="GO" id="GO:0008966">
    <property type="term" value="F:phosphoglucosamine mutase activity"/>
    <property type="evidence" value="ECO:0007669"/>
    <property type="project" value="UniProtKB-UniRule"/>
</dbReference>
<dbReference type="GO" id="GO:0004615">
    <property type="term" value="F:phosphomannomutase activity"/>
    <property type="evidence" value="ECO:0007669"/>
    <property type="project" value="TreeGrafter"/>
</dbReference>
<dbReference type="GO" id="GO:0005975">
    <property type="term" value="P:carbohydrate metabolic process"/>
    <property type="evidence" value="ECO:0007669"/>
    <property type="project" value="InterPro"/>
</dbReference>
<dbReference type="GO" id="GO:0009252">
    <property type="term" value="P:peptidoglycan biosynthetic process"/>
    <property type="evidence" value="ECO:0007669"/>
    <property type="project" value="TreeGrafter"/>
</dbReference>
<dbReference type="GO" id="GO:0006048">
    <property type="term" value="P:UDP-N-acetylglucosamine biosynthetic process"/>
    <property type="evidence" value="ECO:0007669"/>
    <property type="project" value="TreeGrafter"/>
</dbReference>
<dbReference type="CDD" id="cd05802">
    <property type="entry name" value="GlmM"/>
    <property type="match status" value="1"/>
</dbReference>
<dbReference type="FunFam" id="3.30.310.50:FF:000001">
    <property type="entry name" value="Phosphoglucosamine mutase"/>
    <property type="match status" value="1"/>
</dbReference>
<dbReference type="FunFam" id="3.40.120.10:FF:000001">
    <property type="entry name" value="Phosphoglucosamine mutase"/>
    <property type="match status" value="1"/>
</dbReference>
<dbReference type="FunFam" id="3.40.120.10:FF:000003">
    <property type="entry name" value="Phosphoglucosamine mutase"/>
    <property type="match status" value="1"/>
</dbReference>
<dbReference type="Gene3D" id="3.40.120.10">
    <property type="entry name" value="Alpha-D-Glucose-1,6-Bisphosphate, subunit A, domain 3"/>
    <property type="match status" value="3"/>
</dbReference>
<dbReference type="Gene3D" id="3.30.310.50">
    <property type="entry name" value="Alpha-D-phosphohexomutase, C-terminal domain"/>
    <property type="match status" value="1"/>
</dbReference>
<dbReference type="HAMAP" id="MF_01554_B">
    <property type="entry name" value="GlmM_B"/>
    <property type="match status" value="1"/>
</dbReference>
<dbReference type="InterPro" id="IPR005844">
    <property type="entry name" value="A-D-PHexomutase_a/b/a-I"/>
</dbReference>
<dbReference type="InterPro" id="IPR016055">
    <property type="entry name" value="A-D-PHexomutase_a/b/a-I/II/III"/>
</dbReference>
<dbReference type="InterPro" id="IPR005845">
    <property type="entry name" value="A-D-PHexomutase_a/b/a-II"/>
</dbReference>
<dbReference type="InterPro" id="IPR005846">
    <property type="entry name" value="A-D-PHexomutase_a/b/a-III"/>
</dbReference>
<dbReference type="InterPro" id="IPR005843">
    <property type="entry name" value="A-D-PHexomutase_C"/>
</dbReference>
<dbReference type="InterPro" id="IPR036900">
    <property type="entry name" value="A-D-PHexomutase_C_sf"/>
</dbReference>
<dbReference type="InterPro" id="IPR016066">
    <property type="entry name" value="A-D-PHexomutase_CS"/>
</dbReference>
<dbReference type="InterPro" id="IPR005841">
    <property type="entry name" value="Alpha-D-phosphohexomutase_SF"/>
</dbReference>
<dbReference type="InterPro" id="IPR006352">
    <property type="entry name" value="GlmM_bact"/>
</dbReference>
<dbReference type="InterPro" id="IPR050060">
    <property type="entry name" value="Phosphoglucosamine_mutase"/>
</dbReference>
<dbReference type="NCBIfam" id="TIGR01455">
    <property type="entry name" value="glmM"/>
    <property type="match status" value="1"/>
</dbReference>
<dbReference type="NCBIfam" id="NF008139">
    <property type="entry name" value="PRK10887.1"/>
    <property type="match status" value="1"/>
</dbReference>
<dbReference type="PANTHER" id="PTHR42946:SF1">
    <property type="entry name" value="PHOSPHOGLUCOMUTASE (ALPHA-D-GLUCOSE-1,6-BISPHOSPHATE-DEPENDENT)"/>
    <property type="match status" value="1"/>
</dbReference>
<dbReference type="PANTHER" id="PTHR42946">
    <property type="entry name" value="PHOSPHOHEXOSE MUTASE"/>
    <property type="match status" value="1"/>
</dbReference>
<dbReference type="Pfam" id="PF02878">
    <property type="entry name" value="PGM_PMM_I"/>
    <property type="match status" value="1"/>
</dbReference>
<dbReference type="Pfam" id="PF02879">
    <property type="entry name" value="PGM_PMM_II"/>
    <property type="match status" value="1"/>
</dbReference>
<dbReference type="Pfam" id="PF02880">
    <property type="entry name" value="PGM_PMM_III"/>
    <property type="match status" value="1"/>
</dbReference>
<dbReference type="Pfam" id="PF00408">
    <property type="entry name" value="PGM_PMM_IV"/>
    <property type="match status" value="1"/>
</dbReference>
<dbReference type="PRINTS" id="PR00509">
    <property type="entry name" value="PGMPMM"/>
</dbReference>
<dbReference type="SUPFAM" id="SSF55957">
    <property type="entry name" value="Phosphoglucomutase, C-terminal domain"/>
    <property type="match status" value="1"/>
</dbReference>
<dbReference type="SUPFAM" id="SSF53738">
    <property type="entry name" value="Phosphoglucomutase, first 3 domains"/>
    <property type="match status" value="3"/>
</dbReference>
<dbReference type="PROSITE" id="PS00710">
    <property type="entry name" value="PGM_PMM"/>
    <property type="match status" value="1"/>
</dbReference>
<protein>
    <recommendedName>
        <fullName evidence="1">Phosphoglucosamine mutase</fullName>
        <ecNumber evidence="1">5.4.2.10</ecNumber>
    </recommendedName>
</protein>
<comment type="function">
    <text evidence="1">Catalyzes the conversion of glucosamine-6-phosphate to glucosamine-1-phosphate.</text>
</comment>
<comment type="catalytic activity">
    <reaction evidence="1">
        <text>alpha-D-glucosamine 1-phosphate = D-glucosamine 6-phosphate</text>
        <dbReference type="Rhea" id="RHEA:23424"/>
        <dbReference type="ChEBI" id="CHEBI:58516"/>
        <dbReference type="ChEBI" id="CHEBI:58725"/>
        <dbReference type="EC" id="5.4.2.10"/>
    </reaction>
</comment>
<comment type="cofactor">
    <cofactor evidence="1">
        <name>Mg(2+)</name>
        <dbReference type="ChEBI" id="CHEBI:18420"/>
    </cofactor>
    <text evidence="1">Binds 1 Mg(2+) ion per subunit.</text>
</comment>
<comment type="PTM">
    <text evidence="1">Activated by phosphorylation.</text>
</comment>
<comment type="similarity">
    <text evidence="1">Belongs to the phosphohexose mutase family.</text>
</comment>